<gene>
    <name type="primary">Fuom</name>
    <name type="synonym">Le51</name>
</gene>
<reference key="1">
    <citation type="journal article" date="2004" name="Biotechnol. Bioeng.">
        <title>A novel system for expressing recombinant proteins over a wide temperature range from 4 to 35 degrees C.</title>
        <authorList>
            <person name="Nakashima N."/>
            <person name="Tamura T."/>
        </authorList>
    </citation>
    <scope>NUCLEOTIDE SEQUENCE [MRNA] (ISOFORM 3)</scope>
    <source>
        <strain>BALB/cJ</strain>
        <tissue>Liver</tissue>
    </source>
</reference>
<reference key="2">
    <citation type="journal article" date="2005" name="Science">
        <title>The transcriptional landscape of the mammalian genome.</title>
        <authorList>
            <person name="Carninci P."/>
            <person name="Kasukawa T."/>
            <person name="Katayama S."/>
            <person name="Gough J."/>
            <person name="Frith M.C."/>
            <person name="Maeda N."/>
            <person name="Oyama R."/>
            <person name="Ravasi T."/>
            <person name="Lenhard B."/>
            <person name="Wells C."/>
            <person name="Kodzius R."/>
            <person name="Shimokawa K."/>
            <person name="Bajic V.B."/>
            <person name="Brenner S.E."/>
            <person name="Batalov S."/>
            <person name="Forrest A.R."/>
            <person name="Zavolan M."/>
            <person name="Davis M.J."/>
            <person name="Wilming L.G."/>
            <person name="Aidinis V."/>
            <person name="Allen J.E."/>
            <person name="Ambesi-Impiombato A."/>
            <person name="Apweiler R."/>
            <person name="Aturaliya R.N."/>
            <person name="Bailey T.L."/>
            <person name="Bansal M."/>
            <person name="Baxter L."/>
            <person name="Beisel K.W."/>
            <person name="Bersano T."/>
            <person name="Bono H."/>
            <person name="Chalk A.M."/>
            <person name="Chiu K.P."/>
            <person name="Choudhary V."/>
            <person name="Christoffels A."/>
            <person name="Clutterbuck D.R."/>
            <person name="Crowe M.L."/>
            <person name="Dalla E."/>
            <person name="Dalrymple B.P."/>
            <person name="de Bono B."/>
            <person name="Della Gatta G."/>
            <person name="di Bernardo D."/>
            <person name="Down T."/>
            <person name="Engstrom P."/>
            <person name="Fagiolini M."/>
            <person name="Faulkner G."/>
            <person name="Fletcher C.F."/>
            <person name="Fukushima T."/>
            <person name="Furuno M."/>
            <person name="Futaki S."/>
            <person name="Gariboldi M."/>
            <person name="Georgii-Hemming P."/>
            <person name="Gingeras T.R."/>
            <person name="Gojobori T."/>
            <person name="Green R.E."/>
            <person name="Gustincich S."/>
            <person name="Harbers M."/>
            <person name="Hayashi Y."/>
            <person name="Hensch T.K."/>
            <person name="Hirokawa N."/>
            <person name="Hill D."/>
            <person name="Huminiecki L."/>
            <person name="Iacono M."/>
            <person name="Ikeo K."/>
            <person name="Iwama A."/>
            <person name="Ishikawa T."/>
            <person name="Jakt M."/>
            <person name="Kanapin A."/>
            <person name="Katoh M."/>
            <person name="Kawasawa Y."/>
            <person name="Kelso J."/>
            <person name="Kitamura H."/>
            <person name="Kitano H."/>
            <person name="Kollias G."/>
            <person name="Krishnan S.P."/>
            <person name="Kruger A."/>
            <person name="Kummerfeld S.K."/>
            <person name="Kurochkin I.V."/>
            <person name="Lareau L.F."/>
            <person name="Lazarevic D."/>
            <person name="Lipovich L."/>
            <person name="Liu J."/>
            <person name="Liuni S."/>
            <person name="McWilliam S."/>
            <person name="Madan Babu M."/>
            <person name="Madera M."/>
            <person name="Marchionni L."/>
            <person name="Matsuda H."/>
            <person name="Matsuzawa S."/>
            <person name="Miki H."/>
            <person name="Mignone F."/>
            <person name="Miyake S."/>
            <person name="Morris K."/>
            <person name="Mottagui-Tabar S."/>
            <person name="Mulder N."/>
            <person name="Nakano N."/>
            <person name="Nakauchi H."/>
            <person name="Ng P."/>
            <person name="Nilsson R."/>
            <person name="Nishiguchi S."/>
            <person name="Nishikawa S."/>
            <person name="Nori F."/>
            <person name="Ohara O."/>
            <person name="Okazaki Y."/>
            <person name="Orlando V."/>
            <person name="Pang K.C."/>
            <person name="Pavan W.J."/>
            <person name="Pavesi G."/>
            <person name="Pesole G."/>
            <person name="Petrovsky N."/>
            <person name="Piazza S."/>
            <person name="Reed J."/>
            <person name="Reid J.F."/>
            <person name="Ring B.Z."/>
            <person name="Ringwald M."/>
            <person name="Rost B."/>
            <person name="Ruan Y."/>
            <person name="Salzberg S.L."/>
            <person name="Sandelin A."/>
            <person name="Schneider C."/>
            <person name="Schoenbach C."/>
            <person name="Sekiguchi K."/>
            <person name="Semple C.A."/>
            <person name="Seno S."/>
            <person name="Sessa L."/>
            <person name="Sheng Y."/>
            <person name="Shibata Y."/>
            <person name="Shimada H."/>
            <person name="Shimada K."/>
            <person name="Silva D."/>
            <person name="Sinclair B."/>
            <person name="Sperling S."/>
            <person name="Stupka E."/>
            <person name="Sugiura K."/>
            <person name="Sultana R."/>
            <person name="Takenaka Y."/>
            <person name="Taki K."/>
            <person name="Tammoja K."/>
            <person name="Tan S.L."/>
            <person name="Tang S."/>
            <person name="Taylor M.S."/>
            <person name="Tegner J."/>
            <person name="Teichmann S.A."/>
            <person name="Ueda H.R."/>
            <person name="van Nimwegen E."/>
            <person name="Verardo R."/>
            <person name="Wei C.L."/>
            <person name="Yagi K."/>
            <person name="Yamanishi H."/>
            <person name="Zabarovsky E."/>
            <person name="Zhu S."/>
            <person name="Zimmer A."/>
            <person name="Hide W."/>
            <person name="Bult C."/>
            <person name="Grimmond S.M."/>
            <person name="Teasdale R.D."/>
            <person name="Liu E.T."/>
            <person name="Brusic V."/>
            <person name="Quackenbush J."/>
            <person name="Wahlestedt C."/>
            <person name="Mattick J.S."/>
            <person name="Hume D.A."/>
            <person name="Kai C."/>
            <person name="Sasaki D."/>
            <person name="Tomaru Y."/>
            <person name="Fukuda S."/>
            <person name="Kanamori-Katayama M."/>
            <person name="Suzuki M."/>
            <person name="Aoki J."/>
            <person name="Arakawa T."/>
            <person name="Iida J."/>
            <person name="Imamura K."/>
            <person name="Itoh M."/>
            <person name="Kato T."/>
            <person name="Kawaji H."/>
            <person name="Kawagashira N."/>
            <person name="Kawashima T."/>
            <person name="Kojima M."/>
            <person name="Kondo S."/>
            <person name="Konno H."/>
            <person name="Nakano K."/>
            <person name="Ninomiya N."/>
            <person name="Nishio T."/>
            <person name="Okada M."/>
            <person name="Plessy C."/>
            <person name="Shibata K."/>
            <person name="Shiraki T."/>
            <person name="Suzuki S."/>
            <person name="Tagami M."/>
            <person name="Waki K."/>
            <person name="Watahiki A."/>
            <person name="Okamura-Oho Y."/>
            <person name="Suzuki H."/>
            <person name="Kawai J."/>
            <person name="Hayashizaki Y."/>
        </authorList>
    </citation>
    <scope>NUCLEOTIDE SEQUENCE [LARGE SCALE MRNA] (ISOFORMS 2 AND 4)</scope>
    <scope>NUCLEOTIDE SEQUENCE [LARGE SCALE MRNA] OF 17-153 (ISOFORM 5)</scope>
    <source>
        <strain>C57BL/6J</strain>
        <tissue>Bone</tissue>
        <tissue>Cerebellum</tissue>
        <tissue>Retina</tissue>
    </source>
</reference>
<reference key="3">
    <citation type="journal article" date="2004" name="Genome Res.">
        <title>The status, quality, and expansion of the NIH full-length cDNA project: the Mammalian Gene Collection (MGC).</title>
        <authorList>
            <consortium name="The MGC Project Team"/>
        </authorList>
    </citation>
    <scope>NUCLEOTIDE SEQUENCE [LARGE SCALE MRNA] (ISOFORM 1)</scope>
    <source>
        <strain>C57BL/6J</strain>
        <tissue>Mammary gland</tissue>
    </source>
</reference>
<reference key="4">
    <citation type="journal article" date="2007" name="Glycobiology">
        <title>Characterization and role of fucose mutarotase in mammalian cells.</title>
        <authorList>
            <person name="Park D."/>
            <person name="Ryu K.S."/>
            <person name="Choi D."/>
            <person name="Kwak J."/>
            <person name="Park C."/>
        </authorList>
    </citation>
    <scope>FUNCTION</scope>
    <scope>CATALYTIC ACTIVITY</scope>
    <scope>TISSUE SPECIFICITY</scope>
</reference>
<reference key="5">
    <citation type="journal article" date="2009" name="J. Mol. Biol.">
        <title>Crystal structures and enzyme mechanisms of a dual fucose mutarotase/ribose pyranase.</title>
        <authorList>
            <person name="Lee K.H."/>
            <person name="Ryu K.S."/>
            <person name="Kim M.S."/>
            <person name="Suh H.Y."/>
            <person name="Ku B."/>
            <person name="Song Y.L."/>
            <person name="Ko S."/>
            <person name="Lee W."/>
            <person name="Oh B.H."/>
        </authorList>
    </citation>
    <scope>X-RAY CRYSTALLOGRAPHY (1.9 ANGSTROMS) OF 1-149 IN COMPLEX WITH L-FUCOSE</scope>
    <scope>SUBUNIT</scope>
    <scope>SUBSTRATE-BINDING SITES</scope>
    <scope>ACTIVE SITE</scope>
    <scope>CATALYTIC ACTIVITY</scope>
    <scope>FUNCTION</scope>
</reference>
<reference key="6">
    <citation type="journal article" date="2010" name="BMC Genet.">
        <title>Male-like sexual behavior of female mouse lacking fucose mutarotase.</title>
        <authorList>
            <person name="Park D."/>
            <person name="Choi D."/>
            <person name="Lee J."/>
            <person name="Lim D.S."/>
            <person name="Park C."/>
        </authorList>
    </citation>
    <scope>DISRUPTION PHENOTYPE</scope>
</reference>
<proteinExistence type="evidence at protein level"/>
<accession>Q8R2K1</accession>
<accession>Q3TQB6</accession>
<accession>Q76K68</accession>
<accession>Q8C566</accession>
<accession>Q8C8P5</accession>
<organism>
    <name type="scientific">Mus musculus</name>
    <name type="common">Mouse</name>
    <dbReference type="NCBI Taxonomy" id="10090"/>
    <lineage>
        <taxon>Eukaryota</taxon>
        <taxon>Metazoa</taxon>
        <taxon>Chordata</taxon>
        <taxon>Craniata</taxon>
        <taxon>Vertebrata</taxon>
        <taxon>Euteleostomi</taxon>
        <taxon>Mammalia</taxon>
        <taxon>Eutheria</taxon>
        <taxon>Euarchontoglires</taxon>
        <taxon>Glires</taxon>
        <taxon>Rodentia</taxon>
        <taxon>Myomorpha</taxon>
        <taxon>Muroidea</taxon>
        <taxon>Muridae</taxon>
        <taxon>Murinae</taxon>
        <taxon>Mus</taxon>
        <taxon>Mus</taxon>
    </lineage>
</organism>
<feature type="chain" id="PRO_0000286554" description="Fucose mutarotase">
    <location>
        <begin position="1"/>
        <end position="153"/>
    </location>
</feature>
<feature type="active site" description="Proton donor" evidence="2">
    <location>
        <position position="24"/>
    </location>
</feature>
<feature type="active site" evidence="2">
    <location>
        <position position="69"/>
    </location>
</feature>
<feature type="active site" evidence="2">
    <location>
        <position position="120"/>
    </location>
</feature>
<feature type="binding site" evidence="2">
    <location>
        <position position="32"/>
    </location>
    <ligand>
        <name>substrate</name>
    </ligand>
</feature>
<feature type="binding site" evidence="2">
    <location>
        <position position="79"/>
    </location>
    <ligand>
        <name>substrate</name>
    </ligand>
</feature>
<feature type="binding site" evidence="2">
    <location>
        <position position="120"/>
    </location>
    <ligand>
        <name>substrate</name>
    </ligand>
</feature>
<feature type="binding site" evidence="2">
    <location>
        <position position="138"/>
    </location>
    <ligand>
        <name>substrate</name>
    </ligand>
</feature>
<feature type="binding site" evidence="2">
    <location>
        <position position="140"/>
    </location>
    <ligand>
        <name>substrate</name>
    </ligand>
</feature>
<feature type="splice variant" id="VSP_025082" description="In isoform 3." evidence="4">
    <original>MVALKGIPKVLSPELLFALARMGH</original>
    <variation>MSISGIVILSAVLSIKINMLILTKTSCRIRHEASCRIRHE</variation>
    <location>
        <begin position="1"/>
        <end position="24"/>
    </location>
</feature>
<feature type="splice variant" id="VSP_025083" description="In isoform 4." evidence="5">
    <original>KTLMKLERFEFYERAKKAFAVVATGEMALYGNIILKKGTLDLGPS</original>
    <variation>VSAAPTMGRSVSWHLGSEG</variation>
    <location>
        <begin position="109"/>
        <end position="153"/>
    </location>
</feature>
<feature type="splice variant" id="VSP_025084" description="In isoform 5." evidence="5">
    <original>KTLMKLERFEFYERAKKAFAVVATGEMALYGNIILKKGTLDLGPS</original>
    <variation>AQTEKRYKRYPLSLDP</variation>
    <location>
        <begin position="109"/>
        <end position="153"/>
    </location>
</feature>
<feature type="splice variant" id="VSP_025085" description="In isoform 2." evidence="5">
    <location>
        <begin position="134"/>
        <end position="153"/>
    </location>
</feature>
<feature type="helix" evidence="7">
    <location>
        <begin position="13"/>
        <end position="21"/>
    </location>
</feature>
<feature type="strand" evidence="7">
    <location>
        <begin position="27"/>
        <end position="31"/>
    </location>
</feature>
<feature type="helix" evidence="7">
    <location>
        <begin position="37"/>
        <end position="40"/>
    </location>
</feature>
<feature type="helix" evidence="7">
    <location>
        <begin position="41"/>
        <end position="43"/>
    </location>
</feature>
<feature type="strand" evidence="7">
    <location>
        <begin position="46"/>
        <end position="50"/>
    </location>
</feature>
<feature type="helix" evidence="7">
    <location>
        <begin position="55"/>
        <end position="65"/>
    </location>
</feature>
<feature type="strand" evidence="7">
    <location>
        <begin position="70"/>
        <end position="73"/>
    </location>
</feature>
<feature type="strand" evidence="7">
    <location>
        <begin position="75"/>
        <end position="79"/>
    </location>
</feature>
<feature type="helix" evidence="7">
    <location>
        <begin position="83"/>
        <end position="87"/>
    </location>
</feature>
<feature type="helix" evidence="7">
    <location>
        <begin position="94"/>
        <end position="104"/>
    </location>
</feature>
<feature type="strand" evidence="7">
    <location>
        <begin position="112"/>
        <end position="114"/>
    </location>
</feature>
<feature type="helix" evidence="7">
    <location>
        <begin position="116"/>
        <end position="124"/>
    </location>
</feature>
<feature type="strand" evidence="7">
    <location>
        <begin position="126"/>
        <end position="132"/>
    </location>
</feature>
<feature type="strand" evidence="7">
    <location>
        <begin position="141"/>
        <end position="145"/>
    </location>
</feature>
<name>FUCM_MOUSE</name>
<keyword id="KW-0002">3D-structure</keyword>
<keyword id="KW-0025">Alternative splicing</keyword>
<keyword id="KW-0413">Isomerase</keyword>
<keyword id="KW-1185">Reference proteome</keyword>
<dbReference type="EC" id="5.1.3.29" evidence="1 2"/>
<dbReference type="EMBL" id="AB094480">
    <property type="protein sequence ID" value="BAD11304.1"/>
    <property type="molecule type" value="mRNA"/>
</dbReference>
<dbReference type="EMBL" id="AK044731">
    <property type="protein sequence ID" value="BAC32055.1"/>
    <property type="molecule type" value="mRNA"/>
</dbReference>
<dbReference type="EMBL" id="AK079410">
    <property type="protein sequence ID" value="BAC37637.1"/>
    <property type="molecule type" value="mRNA"/>
</dbReference>
<dbReference type="EMBL" id="AK163708">
    <property type="protein sequence ID" value="BAE37468.1"/>
    <property type="status" value="ALT_INIT"/>
    <property type="molecule type" value="mRNA"/>
</dbReference>
<dbReference type="EMBL" id="BC028662">
    <property type="protein sequence ID" value="AAH28662.1"/>
    <property type="molecule type" value="mRNA"/>
</dbReference>
<dbReference type="CCDS" id="CCDS40173.1">
    <molecule id="Q8R2K1-1"/>
</dbReference>
<dbReference type="RefSeq" id="NP_001273146.1">
    <property type="nucleotide sequence ID" value="NM_001286217.1"/>
</dbReference>
<dbReference type="RefSeq" id="NP_001273147.1">
    <property type="nucleotide sequence ID" value="NM_001286218.1"/>
</dbReference>
<dbReference type="RefSeq" id="NP_081204.2">
    <molecule id="Q8R2K1-1"/>
    <property type="nucleotide sequence ID" value="NM_026928.4"/>
</dbReference>
<dbReference type="PDB" id="2WCU">
    <property type="method" value="X-ray"/>
    <property type="resolution" value="1.90 A"/>
    <property type="chains" value="A/B=1-149"/>
</dbReference>
<dbReference type="PDBsum" id="2WCU"/>
<dbReference type="SMR" id="Q8R2K1"/>
<dbReference type="FunCoup" id="Q8R2K1">
    <property type="interactions" value="6"/>
</dbReference>
<dbReference type="STRING" id="10090.ENSMUSP00000026539"/>
<dbReference type="iPTMnet" id="Q8R2K1"/>
<dbReference type="PhosphoSitePlus" id="Q8R2K1"/>
<dbReference type="jPOST" id="Q8R2K1"/>
<dbReference type="PaxDb" id="10090-ENSMUSP00000026539"/>
<dbReference type="PeptideAtlas" id="Q8R2K1"/>
<dbReference type="ProteomicsDB" id="266886">
    <molecule id="Q8R2K1-1"/>
</dbReference>
<dbReference type="ProteomicsDB" id="266887">
    <molecule id="Q8R2K1-2"/>
</dbReference>
<dbReference type="ProteomicsDB" id="266888">
    <molecule id="Q8R2K1-3"/>
</dbReference>
<dbReference type="ProteomicsDB" id="266889">
    <molecule id="Q8R2K1-4"/>
</dbReference>
<dbReference type="ProteomicsDB" id="266890">
    <molecule id="Q8R2K1-5"/>
</dbReference>
<dbReference type="Antibodypedia" id="48803">
    <property type="antibodies" value="76 antibodies from 16 providers"/>
</dbReference>
<dbReference type="DNASU" id="69064"/>
<dbReference type="Ensembl" id="ENSMUST00000026539.14">
    <molecule id="Q8R2K1-1"/>
    <property type="protein sequence ID" value="ENSMUSP00000026539.8"/>
    <property type="gene ID" value="ENSMUSG00000025466.20"/>
</dbReference>
<dbReference type="Ensembl" id="ENSMUST00000121115.2">
    <molecule id="Q8R2K1-4"/>
    <property type="protein sequence ID" value="ENSMUSP00000112970.2"/>
    <property type="gene ID" value="ENSMUSG00000025466.20"/>
</dbReference>
<dbReference type="Ensembl" id="ENSMUST00000148716.8">
    <molecule id="Q8R2K1-2"/>
    <property type="protein sequence ID" value="ENSMUSP00000120353.2"/>
    <property type="gene ID" value="ENSMUSG00000025466.20"/>
</dbReference>
<dbReference type="GeneID" id="69064"/>
<dbReference type="KEGG" id="mmu:69064"/>
<dbReference type="UCSC" id="uc009kgu.2">
    <molecule id="Q8R2K1-1"/>
    <property type="organism name" value="mouse"/>
</dbReference>
<dbReference type="UCSC" id="uc009kgw.2">
    <molecule id="Q8R2K1-4"/>
    <property type="organism name" value="mouse"/>
</dbReference>
<dbReference type="AGR" id="MGI:1916314"/>
<dbReference type="CTD" id="282969"/>
<dbReference type="MGI" id="MGI:1916314">
    <property type="gene designation" value="Fuom"/>
</dbReference>
<dbReference type="VEuPathDB" id="HostDB:ENSMUSG00000025466"/>
<dbReference type="eggNOG" id="ENOG502RZR7">
    <property type="taxonomic scope" value="Eukaryota"/>
</dbReference>
<dbReference type="GeneTree" id="ENSGT00390000001197"/>
<dbReference type="HOGENOM" id="CLU_120075_2_0_1"/>
<dbReference type="InParanoid" id="Q8R2K1"/>
<dbReference type="OMA" id="PVWDTYT"/>
<dbReference type="PhylomeDB" id="Q8R2K1"/>
<dbReference type="TreeFam" id="TF324689"/>
<dbReference type="BRENDA" id="5.1.3.29">
    <property type="organism ID" value="3474"/>
</dbReference>
<dbReference type="BRENDA" id="5.4.99.62">
    <property type="organism ID" value="3474"/>
</dbReference>
<dbReference type="Reactome" id="R-MMU-6787639">
    <property type="pathway name" value="GDP-fucose biosynthesis"/>
</dbReference>
<dbReference type="UniPathway" id="UPA00956"/>
<dbReference type="BioGRID-ORCS" id="69064">
    <property type="hits" value="0 hits in 77 CRISPR screens"/>
</dbReference>
<dbReference type="ChiTaRS" id="Fuom">
    <property type="organism name" value="mouse"/>
</dbReference>
<dbReference type="EvolutionaryTrace" id="Q8R2K1"/>
<dbReference type="PRO" id="PR:Q8R2K1"/>
<dbReference type="Proteomes" id="UP000000589">
    <property type="component" value="Chromosome 7"/>
</dbReference>
<dbReference type="RNAct" id="Q8R2K1">
    <property type="molecule type" value="protein"/>
</dbReference>
<dbReference type="Bgee" id="ENSMUSG00000025466">
    <property type="expression patterns" value="Expressed in interventricular septum and 227 other cell types or tissues"/>
</dbReference>
<dbReference type="ExpressionAtlas" id="Q8R2K1">
    <property type="expression patterns" value="baseline and differential"/>
</dbReference>
<dbReference type="GO" id="GO:0005829">
    <property type="term" value="C:cytosol"/>
    <property type="evidence" value="ECO:0000314"/>
    <property type="project" value="MGI"/>
</dbReference>
<dbReference type="GO" id="GO:0042806">
    <property type="term" value="F:fucose binding"/>
    <property type="evidence" value="ECO:0000314"/>
    <property type="project" value="UniProtKB"/>
</dbReference>
<dbReference type="GO" id="GO:0036373">
    <property type="term" value="F:L-fucose mutarotase activity"/>
    <property type="evidence" value="ECO:0000314"/>
    <property type="project" value="UniProtKB"/>
</dbReference>
<dbReference type="GO" id="GO:0016857">
    <property type="term" value="F:racemase and epimerase activity, acting on carbohydrates and derivatives"/>
    <property type="evidence" value="ECO:0000314"/>
    <property type="project" value="UniProtKB"/>
</dbReference>
<dbReference type="GO" id="GO:0060180">
    <property type="term" value="P:female mating behavior"/>
    <property type="evidence" value="ECO:0000315"/>
    <property type="project" value="MGI"/>
</dbReference>
<dbReference type="GO" id="GO:0006004">
    <property type="term" value="P:fucose metabolic process"/>
    <property type="evidence" value="ECO:0000314"/>
    <property type="project" value="UniProtKB"/>
</dbReference>
<dbReference type="GO" id="GO:0036065">
    <property type="term" value="P:fucosylation"/>
    <property type="evidence" value="ECO:0000315"/>
    <property type="project" value="MGI"/>
</dbReference>
<dbReference type="GO" id="GO:0042352">
    <property type="term" value="P:GDP-L-fucose salvage"/>
    <property type="evidence" value="ECO:0000314"/>
    <property type="project" value="MGI"/>
</dbReference>
<dbReference type="GO" id="GO:0045665">
    <property type="term" value="P:negative regulation of neuron differentiation"/>
    <property type="evidence" value="ECO:0000315"/>
    <property type="project" value="MGI"/>
</dbReference>
<dbReference type="GO" id="GO:0030182">
    <property type="term" value="P:neuron differentiation"/>
    <property type="evidence" value="ECO:0000315"/>
    <property type="project" value="MGI"/>
</dbReference>
<dbReference type="FunFam" id="3.40.1650.10:FF:000005">
    <property type="entry name" value="Fucose mutarotase"/>
    <property type="match status" value="1"/>
</dbReference>
<dbReference type="Gene3D" id="3.40.1650.10">
    <property type="entry name" value="RbsD-like domain"/>
    <property type="match status" value="1"/>
</dbReference>
<dbReference type="InterPro" id="IPR023750">
    <property type="entry name" value="RbsD-like_sf"/>
</dbReference>
<dbReference type="InterPro" id="IPR050443">
    <property type="entry name" value="RbsD/FucU_mutarotase"/>
</dbReference>
<dbReference type="InterPro" id="IPR007721">
    <property type="entry name" value="RbsD_FucU"/>
</dbReference>
<dbReference type="PANTHER" id="PTHR31690">
    <property type="entry name" value="FUCOSE MUTAROTASE"/>
    <property type="match status" value="1"/>
</dbReference>
<dbReference type="PANTHER" id="PTHR31690:SF4">
    <property type="entry name" value="FUCOSE MUTAROTASE"/>
    <property type="match status" value="1"/>
</dbReference>
<dbReference type="Pfam" id="PF05025">
    <property type="entry name" value="RbsD_FucU"/>
    <property type="match status" value="1"/>
</dbReference>
<dbReference type="SUPFAM" id="SSF102546">
    <property type="entry name" value="RbsD-like"/>
    <property type="match status" value="1"/>
</dbReference>
<sequence length="153" mass="16805">MVALKGIPKVLSPELLFALARMGHGDEIVLADANFPTSSICQCGPVEIRADGLDIPQLLEAVLRLLPLDTYVESPAAVMDLVPSDKEKGLQTPIWKRYESLLLEADCKKTLMKLERFEFYERAKKAFAVVATGEMALYGNIILKKGTLDLGPS</sequence>
<evidence type="ECO:0000269" key="1">
    <source>
    </source>
</evidence>
<evidence type="ECO:0000269" key="2">
    <source>
    </source>
</evidence>
<evidence type="ECO:0000269" key="3">
    <source>
    </source>
</evidence>
<evidence type="ECO:0000303" key="4">
    <source>
    </source>
</evidence>
<evidence type="ECO:0000303" key="5">
    <source>
    </source>
</evidence>
<evidence type="ECO:0000305" key="6"/>
<evidence type="ECO:0007829" key="7">
    <source>
        <dbReference type="PDB" id="2WCU"/>
    </source>
</evidence>
<comment type="function">
    <text evidence="1">Involved in the interconversion between alpha- and beta-L-fucoses. L-Fucose (6-deoxy-L-galactose) exists as alpha-L-fucose (29.5%) and beta-L-fucose (70.5%), the beta-form is metabolized through the salvage pathway. GDP-L-fucose formed either by the de novo or salvage pathways is transported into the endoplasmic reticulum, where it serves as a substrate for N- and O-glycosylations by fucosyltransferases. Fucosylated structures expressed on cell surfaces or secreted in biological fluids are believed to play a critical role in cell-cell adhesion and recognition processes.</text>
</comment>
<comment type="catalytic activity">
    <reaction evidence="1 2">
        <text>alpha-L-fucose = beta-L-fucose</text>
        <dbReference type="Rhea" id="RHEA:25580"/>
        <dbReference type="ChEBI" id="CHEBI:42548"/>
        <dbReference type="ChEBI" id="CHEBI:42589"/>
        <dbReference type="EC" id="5.1.3.29"/>
    </reaction>
</comment>
<comment type="pathway">
    <text evidence="1 2">Carbohydrate metabolism; L-fucose metabolism.</text>
</comment>
<comment type="subunit">
    <text evidence="2">Mainly homodimer, but also exists as homotetramer, homooctamer, and homodecamer. The homodimeric form seems catalytically inactive.</text>
</comment>
<comment type="alternative products">
    <event type="alternative splicing"/>
    <isoform>
        <id>Q8R2K1-1</id>
        <name>1</name>
        <sequence type="displayed"/>
    </isoform>
    <isoform>
        <id>Q8R2K1-2</id>
        <name>2</name>
        <sequence type="described" ref="VSP_025085"/>
    </isoform>
    <isoform>
        <id>Q8R2K1-3</id>
        <name>3</name>
        <sequence type="described" ref="VSP_025082"/>
    </isoform>
    <isoform>
        <id>Q8R2K1-4</id>
        <name>4</name>
        <sequence type="described" ref="VSP_025083"/>
    </isoform>
    <isoform>
        <id>Q8R2K1-5</id>
        <name>5</name>
        <sequence type="described" ref="VSP_025084"/>
    </isoform>
</comment>
<comment type="tissue specificity">
    <text evidence="1">Widely expressed in various tissues and cell lines, including kidney, liver, and pancreas, marginally in muscle and testis.</text>
</comment>
<comment type="disruption phenotype">
    <text evidence="3">Deficient female mice show reduced sexual receptivity, as measured by lordosis quotient and masculinized sexual behaviors in female mice. Display a reduced number of tyrosine hydroxylase-positive neurons in the anteroventral periventricular nucleus, a sexually dimorphic feature in rats and mice. Embryos at 16.5 dpc have reduced alpha-feto-protein levels and reduced fucosylation of alpha-feto-protein.</text>
</comment>
<comment type="similarity">
    <text evidence="6">Belongs to the RbsD / FucU family.</text>
</comment>
<comment type="sequence caution" evidence="6">
    <conflict type="erroneous initiation">
        <sequence resource="EMBL-CDS" id="BAE37468"/>
    </conflict>
    <text>Truncated N-terminus.</text>
</comment>
<protein>
    <recommendedName>
        <fullName>Fucose mutarotase</fullName>
        <ecNumber evidence="1 2">5.1.3.29</ecNumber>
    </recommendedName>
</protein>